<organismHost>
    <name type="scientific">Canis lupus familiaris</name>
    <name type="common">Dog</name>
    <name type="synonym">Canis familiaris</name>
    <dbReference type="NCBI Taxonomy" id="9615"/>
</organismHost>
<proteinExistence type="inferred from homology"/>
<evidence type="ECO:0000255" key="1">
    <source>
        <dbReference type="HAMAP-Rule" id="MF_04095"/>
    </source>
</evidence>
<evidence type="ECO:0000255" key="2">
    <source>
        <dbReference type="PROSITE-ProRule" id="PRU01276"/>
    </source>
</evidence>
<evidence type="ECO:0000255" key="3">
    <source>
        <dbReference type="PROSITE-ProRule" id="PRU01277"/>
    </source>
</evidence>
<evidence type="ECO:0000256" key="4">
    <source>
        <dbReference type="SAM" id="MobiDB-lite"/>
    </source>
</evidence>
<feature type="chain" id="PRO_0000289885" description="Nucleoprotein">
    <location>
        <begin position="1"/>
        <end position="382"/>
    </location>
</feature>
<feature type="domain" description="CoV N NTD" evidence="2">
    <location>
        <begin position="31"/>
        <end position="153"/>
    </location>
</feature>
<feature type="domain" description="CoV N CTD" evidence="3">
    <location>
        <begin position="224"/>
        <end position="337"/>
    </location>
</feature>
<feature type="region of interest" description="Disordered" evidence="4">
    <location>
        <begin position="1"/>
        <end position="29"/>
    </location>
</feature>
<feature type="region of interest" description="RNA-binding" evidence="1">
    <location>
        <begin position="33"/>
        <end position="159"/>
    </location>
</feature>
<feature type="region of interest" description="Disordered" evidence="4">
    <location>
        <begin position="151"/>
        <end position="240"/>
    </location>
</feature>
<feature type="region of interest" description="Dimerization" evidence="1">
    <location>
        <begin position="231"/>
        <end position="334"/>
    </location>
</feature>
<feature type="compositionally biased region" description="Basic residues" evidence="4">
    <location>
        <begin position="17"/>
        <end position="26"/>
    </location>
</feature>
<feature type="compositionally biased region" description="Low complexity" evidence="4">
    <location>
        <begin position="162"/>
        <end position="182"/>
    </location>
</feature>
<feature type="compositionally biased region" description="Basic and acidic residues" evidence="4">
    <location>
        <begin position="201"/>
        <end position="235"/>
    </location>
</feature>
<feature type="modified residue" description="Phosphoserine; by host" evidence="1">
    <location>
        <position position="9"/>
    </location>
</feature>
<feature type="modified residue" description="Phosphoserine; by host" evidence="1">
    <location>
        <position position="156"/>
    </location>
</feature>
<feature type="modified residue" description="Phosphoserine; by host" evidence="1">
    <location>
        <position position="254"/>
    </location>
</feature>
<feature type="modified residue" description="Phosphoserine; by host" evidence="1">
    <location>
        <position position="256"/>
    </location>
</feature>
<keyword id="KW-0013">ADP-ribosylation</keyword>
<keyword id="KW-1040">Host Golgi apparatus</keyword>
<keyword id="KW-0597">Phosphoprotein</keyword>
<keyword id="KW-0687">Ribonucleoprotein</keyword>
<keyword id="KW-0694">RNA-binding</keyword>
<keyword id="KW-0804">Transcription</keyword>
<keyword id="KW-0805">Transcription regulation</keyword>
<keyword id="KW-0543">Viral nucleoprotein</keyword>
<keyword id="KW-0946">Virion</keyword>
<protein>
    <recommendedName>
        <fullName evidence="1">Nucleoprotein</fullName>
    </recommendedName>
    <alternativeName>
        <fullName evidence="1">Nucleocapsid protein</fullName>
        <shortName evidence="1">NC</shortName>
        <shortName evidence="1">Protein N</shortName>
    </alternativeName>
</protein>
<name>NCAP_CVCBG</name>
<dbReference type="EMBL" id="AY342160">
    <property type="protein sequence ID" value="AAQ17225.1"/>
    <property type="molecule type" value="Genomic_RNA"/>
</dbReference>
<dbReference type="SMR" id="Q7T6S8"/>
<dbReference type="GO" id="GO:0044172">
    <property type="term" value="C:host cell endoplasmic reticulum-Golgi intermediate compartment"/>
    <property type="evidence" value="ECO:0007669"/>
    <property type="project" value="UniProtKB-SubCell"/>
</dbReference>
<dbReference type="GO" id="GO:0044177">
    <property type="term" value="C:host cell Golgi apparatus"/>
    <property type="evidence" value="ECO:0007669"/>
    <property type="project" value="UniProtKB-SubCell"/>
</dbReference>
<dbReference type="GO" id="GO:1990904">
    <property type="term" value="C:ribonucleoprotein complex"/>
    <property type="evidence" value="ECO:0007669"/>
    <property type="project" value="UniProtKB-KW"/>
</dbReference>
<dbReference type="GO" id="GO:0019013">
    <property type="term" value="C:viral nucleocapsid"/>
    <property type="evidence" value="ECO:0007669"/>
    <property type="project" value="UniProtKB-KW"/>
</dbReference>
<dbReference type="GO" id="GO:0003723">
    <property type="term" value="F:RNA binding"/>
    <property type="evidence" value="ECO:0007669"/>
    <property type="project" value="UniProtKB-KW"/>
</dbReference>
<dbReference type="CDD" id="cd21595">
    <property type="entry name" value="CoV_N-CTD"/>
    <property type="match status" value="1"/>
</dbReference>
<dbReference type="CDD" id="cd21554">
    <property type="entry name" value="CoV_N-NTD"/>
    <property type="match status" value="1"/>
</dbReference>
<dbReference type="HAMAP" id="MF_04095">
    <property type="entry name" value="ALPHA_CORONA_NCAP"/>
    <property type="match status" value="1"/>
</dbReference>
<dbReference type="InterPro" id="IPR044344">
    <property type="entry name" value="N_prot_C_CoV"/>
</dbReference>
<dbReference type="InterPro" id="IPR044345">
    <property type="entry name" value="N_prot_N_CoV"/>
</dbReference>
<dbReference type="InterPro" id="IPR042548">
    <property type="entry name" value="NCAP_aCoV"/>
</dbReference>
<dbReference type="InterPro" id="IPR001218">
    <property type="entry name" value="Nucleocap_CoV"/>
</dbReference>
<dbReference type="InterPro" id="IPR037179">
    <property type="entry name" value="Nucleocapsid_C"/>
</dbReference>
<dbReference type="InterPro" id="IPR037195">
    <property type="entry name" value="Nucleocapsid_N"/>
</dbReference>
<dbReference type="Pfam" id="PF00937">
    <property type="entry name" value="CoV_nucleocap"/>
    <property type="match status" value="1"/>
</dbReference>
<dbReference type="PIRSF" id="PIRSF003888">
    <property type="entry name" value="Corona_nucleocap"/>
    <property type="match status" value="1"/>
</dbReference>
<dbReference type="SUPFAM" id="SSF110304">
    <property type="entry name" value="Coronavirus RNA-binding domain"/>
    <property type="match status" value="1"/>
</dbReference>
<dbReference type="SUPFAM" id="SSF103068">
    <property type="entry name" value="Nucleocapsid protein dimerization domain"/>
    <property type="match status" value="1"/>
</dbReference>
<dbReference type="PROSITE" id="PS51929">
    <property type="entry name" value="COV_N_CTD"/>
    <property type="match status" value="1"/>
</dbReference>
<dbReference type="PROSITE" id="PS51928">
    <property type="entry name" value="COV_N_NTD"/>
    <property type="match status" value="1"/>
</dbReference>
<reference key="1">
    <citation type="journal article" date="2004" name="Virus Res.">
        <title>Molecular characterization of a virulent canine coronavirus BGF strain.</title>
        <authorList>
            <person name="Sanchez-Morgado J.M."/>
            <person name="Poynter S."/>
            <person name="Morris T.H."/>
        </authorList>
    </citation>
    <scope>NUCLEOTIDE SEQUENCE [GENOMIC RNA]</scope>
</reference>
<sequence length="382" mass="43486">MASQGQRVSWGDESTKRRGRSNSRGRKNNDIPLSFFNPVTLKQGSKFWDLCPRDFVPLKIGNKDQQIGYWNRQIRYRMVKGQRKDLPERWFFYYLGTGPHADAKFKQKLDGVVWVAKEGAMTKPTTLGTRGTNNESKALKFDVKVPSEFQLEVNQSRDNSRSRSQSRSQSRTRAQSRGRQQSNNKKDDSVEQAVLAALKKLGVDTEKQQQRARSKSKERSNSKTRDTTPKNENKHTWKRTAGKGDVTKFYGARSSSANFGDSDLVANGNSAKHYPQLAECVPSVSSILFGSHWTAKEDGDQIEVTFTHKYHLPKDDPKTGQFLQQINAYARPSEVAKEQRLRKARSKSAERVEQEVVPDALTENYTDVFDDTQVEIIDEVTN</sequence>
<gene>
    <name evidence="1" type="primary">N</name>
</gene>
<accession>Q7T6S8</accession>
<organism>
    <name type="scientific">Canine coronavirus (strain BGF10)</name>
    <name type="common">CCoV</name>
    <name type="synonym">Canine enteric coronavirus</name>
    <dbReference type="NCBI Taxonomy" id="441619"/>
    <lineage>
        <taxon>Viruses</taxon>
        <taxon>Riboviria</taxon>
        <taxon>Orthornavirae</taxon>
        <taxon>Pisuviricota</taxon>
        <taxon>Pisoniviricetes</taxon>
        <taxon>Nidovirales</taxon>
        <taxon>Cornidovirineae</taxon>
        <taxon>Coronaviridae</taxon>
        <taxon>Orthocoronavirinae</taxon>
        <taxon>Alphacoronavirus</taxon>
        <taxon>Tegacovirus</taxon>
        <taxon>Alphacoronavirus 1</taxon>
    </lineage>
</organism>
<comment type="function">
    <text evidence="1">Packages the positive strand viral genome RNA into a helical ribonucleocapsid (RNP) and plays a fundamental role during virion assembly through its interactions with the viral genome and membrane protein M. Plays an important role in enhancing the efficiency of subgenomic viral RNA transcription as well as viral replication.</text>
</comment>
<comment type="subunit">
    <text evidence="1">Homooligomer. Both monomeric and oligomeric forms interact with RNA. Interacts with protein M. Interacts with NSP3; this interaction serves to tether the genome to the newly translated replicase-transcriptase complex at a very early stage of infection.</text>
</comment>
<comment type="subcellular location">
    <subcellularLocation>
        <location evidence="1">Virion</location>
    </subcellularLocation>
    <subcellularLocation>
        <location evidence="1">Host endoplasmic reticulum-Golgi intermediate compartment</location>
    </subcellularLocation>
    <subcellularLocation>
        <location evidence="1">Host Golgi apparatus</location>
    </subcellularLocation>
    <text evidence="1">Located inside the virion, complexed with the viral RNA. Probably associates with ER-derived membranes where it participates in viral RNA synthesis and virus budding.</text>
</comment>
<comment type="PTM">
    <text evidence="1">ADP-ribosylated. The ADP-ribosylation is retained in the virion during infection.</text>
</comment>
<comment type="PTM">
    <text evidence="1">Phosphorylated on serine and threonine residues.</text>
</comment>
<comment type="similarity">
    <text evidence="1">Belongs to the alphacoronavirus nucleocapsid protein family.</text>
</comment>